<gene>
    <name evidence="1" type="primary">hprK</name>
    <name type="ordered locus">BCE33L4856</name>
</gene>
<name>HPRK_BACCZ</name>
<evidence type="ECO:0000255" key="1">
    <source>
        <dbReference type="HAMAP-Rule" id="MF_01249"/>
    </source>
</evidence>
<comment type="function">
    <text evidence="1">Catalyzes the ATP- as well as the pyrophosphate-dependent phosphorylation of a specific serine residue in HPr, a phosphocarrier protein of the phosphoenolpyruvate-dependent sugar phosphotransferase system (PTS). HprK/P also catalyzes the pyrophosphate-producing, inorganic phosphate-dependent dephosphorylation (phosphorolysis) of seryl-phosphorylated HPr (P-Ser-HPr). The two antagonistic activities of HprK/P are regulated by several intracellular metabolites, which change their concentration in response to the absence or presence of rapidly metabolisable carbon sources (glucose, fructose, etc.) in the growth medium. Also phosphorylates/dephosphorylates the HPr-like catabolite repression protein crh on a specific serine residue. Therefore, by controlling the phosphorylation state of HPr and crh, HPrK/P is a sensor enzyme that plays a major role in the regulation of carbon metabolism and sugar transport: it mediates carbon catabolite repression (CCR), and regulates PTS-catalyzed carbohydrate uptake and inducer exclusion.</text>
</comment>
<comment type="catalytic activity">
    <reaction evidence="1">
        <text>[HPr protein]-L-serine + ATP = [HPr protein]-O-phospho-L-serine + ADP + H(+)</text>
        <dbReference type="Rhea" id="RHEA:46600"/>
        <dbReference type="Rhea" id="RHEA-COMP:11602"/>
        <dbReference type="Rhea" id="RHEA-COMP:11603"/>
        <dbReference type="ChEBI" id="CHEBI:15378"/>
        <dbReference type="ChEBI" id="CHEBI:29999"/>
        <dbReference type="ChEBI" id="CHEBI:30616"/>
        <dbReference type="ChEBI" id="CHEBI:83421"/>
        <dbReference type="ChEBI" id="CHEBI:456216"/>
    </reaction>
</comment>
<comment type="catalytic activity">
    <reaction evidence="1">
        <text>[HPr protein]-O-phospho-L-serine + phosphate + H(+) = [HPr protein]-L-serine + diphosphate</text>
        <dbReference type="Rhea" id="RHEA:46604"/>
        <dbReference type="Rhea" id="RHEA-COMP:11602"/>
        <dbReference type="Rhea" id="RHEA-COMP:11603"/>
        <dbReference type="ChEBI" id="CHEBI:15378"/>
        <dbReference type="ChEBI" id="CHEBI:29999"/>
        <dbReference type="ChEBI" id="CHEBI:33019"/>
        <dbReference type="ChEBI" id="CHEBI:43474"/>
        <dbReference type="ChEBI" id="CHEBI:83421"/>
    </reaction>
</comment>
<comment type="cofactor">
    <cofactor evidence="1">
        <name>Mg(2+)</name>
        <dbReference type="ChEBI" id="CHEBI:18420"/>
    </cofactor>
</comment>
<comment type="subunit">
    <text evidence="1">Homohexamer.</text>
</comment>
<comment type="domain">
    <text evidence="1">The Walker A ATP-binding motif also binds Pi and PPi.</text>
</comment>
<comment type="miscellaneous">
    <text evidence="1">Both phosphorylation and phosphorolysis are carried out by the same active site and suggest a common mechanism for both reactions.</text>
</comment>
<comment type="similarity">
    <text evidence="1">Belongs to the HPrK/P family.</text>
</comment>
<proteinExistence type="inferred from homology"/>
<protein>
    <recommendedName>
        <fullName evidence="1">HPr kinase/phosphorylase</fullName>
        <shortName evidence="1">HPrK/P</shortName>
        <ecNumber evidence="1">2.7.11.-</ecNumber>
        <ecNumber evidence="1">2.7.4.-</ecNumber>
    </recommendedName>
    <alternativeName>
        <fullName evidence="1">HPr(Ser) kinase/phosphorylase</fullName>
    </alternativeName>
</protein>
<organism>
    <name type="scientific">Bacillus cereus (strain ZK / E33L)</name>
    <dbReference type="NCBI Taxonomy" id="288681"/>
    <lineage>
        <taxon>Bacteria</taxon>
        <taxon>Bacillati</taxon>
        <taxon>Bacillota</taxon>
        <taxon>Bacilli</taxon>
        <taxon>Bacillales</taxon>
        <taxon>Bacillaceae</taxon>
        <taxon>Bacillus</taxon>
        <taxon>Bacillus cereus group</taxon>
    </lineage>
</organism>
<keyword id="KW-0067">ATP-binding</keyword>
<keyword id="KW-0119">Carbohydrate metabolism</keyword>
<keyword id="KW-0418">Kinase</keyword>
<keyword id="KW-0460">Magnesium</keyword>
<keyword id="KW-0479">Metal-binding</keyword>
<keyword id="KW-0511">Multifunctional enzyme</keyword>
<keyword id="KW-0547">Nucleotide-binding</keyword>
<keyword id="KW-0723">Serine/threonine-protein kinase</keyword>
<keyword id="KW-0808">Transferase</keyword>
<sequence length="309" mass="34587">MPKVRTKDLIEQFQLELISGEEGIHRPIDTSDLSRPGIEMAGFFTYYPADRVQLLGKTELTFFDTLTSDQKQERMKALCTEETPCIIVTRNQDVPDELLQASRESGMPLLRSSQTTTRLSSRLTNYLEGKLAPTTAVHGVLVDIYGVGVLITGQSGVGKSETALELVKRGHRLVADDSVEIRQEDEDMLVGSSPDLIEHLLEIRGLGIINVMTLFGAGAVRNYKRITLVINLEIWDQKKNYDRLGLDEEKMKIIDTELTKITLPVRPGRNLAVIIEVAAMNFRLKRMGVNAAQQFSERLMSAIELGNQE</sequence>
<accession>Q631J0</accession>
<dbReference type="EC" id="2.7.11.-" evidence="1"/>
<dbReference type="EC" id="2.7.4.-" evidence="1"/>
<dbReference type="EMBL" id="CP000001">
    <property type="protein sequence ID" value="AAU15421.1"/>
    <property type="molecule type" value="Genomic_DNA"/>
</dbReference>
<dbReference type="RefSeq" id="WP_001127244.1">
    <property type="nucleotide sequence ID" value="NZ_CP009968.1"/>
</dbReference>
<dbReference type="SMR" id="Q631J0"/>
<dbReference type="GeneID" id="45024995"/>
<dbReference type="KEGG" id="bcz:BCE33L4856"/>
<dbReference type="PATRIC" id="fig|288681.22.peg.497"/>
<dbReference type="Proteomes" id="UP000002612">
    <property type="component" value="Chromosome"/>
</dbReference>
<dbReference type="GO" id="GO:0005524">
    <property type="term" value="F:ATP binding"/>
    <property type="evidence" value="ECO:0007669"/>
    <property type="project" value="UniProtKB-UniRule"/>
</dbReference>
<dbReference type="GO" id="GO:0000287">
    <property type="term" value="F:magnesium ion binding"/>
    <property type="evidence" value="ECO:0007669"/>
    <property type="project" value="UniProtKB-UniRule"/>
</dbReference>
<dbReference type="GO" id="GO:0000155">
    <property type="term" value="F:phosphorelay sensor kinase activity"/>
    <property type="evidence" value="ECO:0007669"/>
    <property type="project" value="InterPro"/>
</dbReference>
<dbReference type="GO" id="GO:0004674">
    <property type="term" value="F:protein serine/threonine kinase activity"/>
    <property type="evidence" value="ECO:0007669"/>
    <property type="project" value="UniProtKB-KW"/>
</dbReference>
<dbReference type="GO" id="GO:0004712">
    <property type="term" value="F:protein serine/threonine/tyrosine kinase activity"/>
    <property type="evidence" value="ECO:0007669"/>
    <property type="project" value="UniProtKB-UniRule"/>
</dbReference>
<dbReference type="GO" id="GO:0006109">
    <property type="term" value="P:regulation of carbohydrate metabolic process"/>
    <property type="evidence" value="ECO:0007669"/>
    <property type="project" value="UniProtKB-UniRule"/>
</dbReference>
<dbReference type="CDD" id="cd01918">
    <property type="entry name" value="HprK_C"/>
    <property type="match status" value="1"/>
</dbReference>
<dbReference type="FunFam" id="3.40.1390.20:FF:000002">
    <property type="entry name" value="HPr kinase/phosphorylase"/>
    <property type="match status" value="1"/>
</dbReference>
<dbReference type="FunFam" id="3.40.50.300:FF:000174">
    <property type="entry name" value="HPr kinase/phosphorylase"/>
    <property type="match status" value="1"/>
</dbReference>
<dbReference type="Gene3D" id="3.40.1390.20">
    <property type="entry name" value="HprK N-terminal domain-like"/>
    <property type="match status" value="1"/>
</dbReference>
<dbReference type="Gene3D" id="3.40.50.300">
    <property type="entry name" value="P-loop containing nucleotide triphosphate hydrolases"/>
    <property type="match status" value="1"/>
</dbReference>
<dbReference type="HAMAP" id="MF_01249">
    <property type="entry name" value="HPr_kinase"/>
    <property type="match status" value="1"/>
</dbReference>
<dbReference type="InterPro" id="IPR003755">
    <property type="entry name" value="HPr(Ser)_kin/Pase"/>
</dbReference>
<dbReference type="InterPro" id="IPR011104">
    <property type="entry name" value="Hpr_kin/Pase_C"/>
</dbReference>
<dbReference type="InterPro" id="IPR011126">
    <property type="entry name" value="Hpr_kin/Pase_Hpr_N"/>
</dbReference>
<dbReference type="InterPro" id="IPR027417">
    <property type="entry name" value="P-loop_NTPase"/>
</dbReference>
<dbReference type="InterPro" id="IPR028979">
    <property type="entry name" value="Ser_kin/Pase_Hpr-like_N_sf"/>
</dbReference>
<dbReference type="NCBIfam" id="TIGR00679">
    <property type="entry name" value="hpr-ser"/>
    <property type="match status" value="1"/>
</dbReference>
<dbReference type="PANTHER" id="PTHR30305:SF1">
    <property type="entry name" value="HPR KINASE_PHOSPHORYLASE"/>
    <property type="match status" value="1"/>
</dbReference>
<dbReference type="PANTHER" id="PTHR30305">
    <property type="entry name" value="PROTEIN YJDM-RELATED"/>
    <property type="match status" value="1"/>
</dbReference>
<dbReference type="Pfam" id="PF07475">
    <property type="entry name" value="Hpr_kinase_C"/>
    <property type="match status" value="1"/>
</dbReference>
<dbReference type="Pfam" id="PF02603">
    <property type="entry name" value="Hpr_kinase_N"/>
    <property type="match status" value="1"/>
</dbReference>
<dbReference type="SUPFAM" id="SSF75138">
    <property type="entry name" value="HprK N-terminal domain-like"/>
    <property type="match status" value="1"/>
</dbReference>
<dbReference type="SUPFAM" id="SSF53795">
    <property type="entry name" value="PEP carboxykinase-like"/>
    <property type="match status" value="1"/>
</dbReference>
<reference key="1">
    <citation type="journal article" date="2006" name="J. Bacteriol.">
        <title>Pathogenomic sequence analysis of Bacillus cereus and Bacillus thuringiensis isolates closely related to Bacillus anthracis.</title>
        <authorList>
            <person name="Han C.S."/>
            <person name="Xie G."/>
            <person name="Challacombe J.F."/>
            <person name="Altherr M.R."/>
            <person name="Bhotika S.S."/>
            <person name="Bruce D."/>
            <person name="Campbell C.S."/>
            <person name="Campbell M.L."/>
            <person name="Chen J."/>
            <person name="Chertkov O."/>
            <person name="Cleland C."/>
            <person name="Dimitrijevic M."/>
            <person name="Doggett N.A."/>
            <person name="Fawcett J.J."/>
            <person name="Glavina T."/>
            <person name="Goodwin L.A."/>
            <person name="Hill K.K."/>
            <person name="Hitchcock P."/>
            <person name="Jackson P.J."/>
            <person name="Keim P."/>
            <person name="Kewalramani A.R."/>
            <person name="Longmire J."/>
            <person name="Lucas S."/>
            <person name="Malfatti S."/>
            <person name="McMurry K."/>
            <person name="Meincke L.J."/>
            <person name="Misra M."/>
            <person name="Moseman B.L."/>
            <person name="Mundt M."/>
            <person name="Munk A.C."/>
            <person name="Okinaka R.T."/>
            <person name="Parson-Quintana B."/>
            <person name="Reilly L.P."/>
            <person name="Richardson P."/>
            <person name="Robinson D.L."/>
            <person name="Rubin E."/>
            <person name="Saunders E."/>
            <person name="Tapia R."/>
            <person name="Tesmer J.G."/>
            <person name="Thayer N."/>
            <person name="Thompson L.S."/>
            <person name="Tice H."/>
            <person name="Ticknor L.O."/>
            <person name="Wills P.L."/>
            <person name="Brettin T.S."/>
            <person name="Gilna P."/>
        </authorList>
    </citation>
    <scope>NUCLEOTIDE SEQUENCE [LARGE SCALE GENOMIC DNA]</scope>
    <source>
        <strain>ZK / E33L</strain>
    </source>
</reference>
<feature type="chain" id="PRO_1000067121" description="HPr kinase/phosphorylase">
    <location>
        <begin position="1"/>
        <end position="309"/>
    </location>
</feature>
<feature type="region of interest" description="Important for the catalytic mechanism of both phosphorylation and dephosphorylation" evidence="1">
    <location>
        <begin position="201"/>
        <end position="210"/>
    </location>
</feature>
<feature type="region of interest" description="Important for the catalytic mechanism of dephosphorylation" evidence="1">
    <location>
        <begin position="264"/>
        <end position="269"/>
    </location>
</feature>
<feature type="active site" evidence="1">
    <location>
        <position position="138"/>
    </location>
</feature>
<feature type="active site" evidence="1">
    <location>
        <position position="159"/>
    </location>
</feature>
<feature type="active site" description="Proton acceptor; for phosphorylation activity. Proton donor; for dephosphorylation activity" evidence="1">
    <location>
        <position position="177"/>
    </location>
</feature>
<feature type="active site" evidence="1">
    <location>
        <position position="243"/>
    </location>
</feature>
<feature type="binding site" evidence="1">
    <location>
        <begin position="153"/>
        <end position="160"/>
    </location>
    <ligand>
        <name>ATP</name>
        <dbReference type="ChEBI" id="CHEBI:30616"/>
    </ligand>
</feature>
<feature type="binding site" evidence="1">
    <location>
        <position position="160"/>
    </location>
    <ligand>
        <name>Mg(2+)</name>
        <dbReference type="ChEBI" id="CHEBI:18420"/>
    </ligand>
</feature>
<feature type="binding site" evidence="1">
    <location>
        <position position="202"/>
    </location>
    <ligand>
        <name>Mg(2+)</name>
        <dbReference type="ChEBI" id="CHEBI:18420"/>
    </ligand>
</feature>